<sequence length="117" mass="13064">MARVTVEDCVDKVPNRFELVMLAAHRAREISAGSAPTVNRDNDKNPAVSLREIAEETQSADDLRERLIESNQHQIEVDEPEEDAMALLMGAEQDKPEEDSMSEEMLLRQLMAAQGQG</sequence>
<name>RPOZ_ROSDO</name>
<evidence type="ECO:0000255" key="1">
    <source>
        <dbReference type="HAMAP-Rule" id="MF_00366"/>
    </source>
</evidence>
<reference key="1">
    <citation type="journal article" date="2007" name="J. Bacteriol.">
        <title>The complete genome sequence of Roseobacter denitrificans reveals a mixotrophic rather than photosynthetic metabolism.</title>
        <authorList>
            <person name="Swingley W.D."/>
            <person name="Sadekar S."/>
            <person name="Mastrian S.D."/>
            <person name="Matthies H.J."/>
            <person name="Hao J."/>
            <person name="Ramos H."/>
            <person name="Acharya C.R."/>
            <person name="Conrad A.L."/>
            <person name="Taylor H.L."/>
            <person name="Dejesa L.C."/>
            <person name="Shah M.K."/>
            <person name="O'Huallachain M.E."/>
            <person name="Lince M.T."/>
            <person name="Blankenship R.E."/>
            <person name="Beatty J.T."/>
            <person name="Touchman J.W."/>
        </authorList>
    </citation>
    <scope>NUCLEOTIDE SEQUENCE [LARGE SCALE GENOMIC DNA]</scope>
    <source>
        <strain>ATCC 33942 / OCh 114</strain>
    </source>
</reference>
<accession>Q16AJ3</accession>
<protein>
    <recommendedName>
        <fullName evidence="1">DNA-directed RNA polymerase subunit omega</fullName>
        <shortName evidence="1">RNAP omega subunit</shortName>
        <ecNumber evidence="1">2.7.7.6</ecNumber>
    </recommendedName>
    <alternativeName>
        <fullName evidence="1">RNA polymerase omega subunit</fullName>
    </alternativeName>
    <alternativeName>
        <fullName evidence="1">Transcriptase subunit omega</fullName>
    </alternativeName>
</protein>
<feature type="chain" id="PRO_1000006001" description="DNA-directed RNA polymerase subunit omega">
    <location>
        <begin position="1"/>
        <end position="117"/>
    </location>
</feature>
<organism>
    <name type="scientific">Roseobacter denitrificans (strain ATCC 33942 / OCh 114)</name>
    <name type="common">Erythrobacter sp. (strain OCh 114)</name>
    <name type="synonym">Roseobacter denitrificans</name>
    <dbReference type="NCBI Taxonomy" id="375451"/>
    <lineage>
        <taxon>Bacteria</taxon>
        <taxon>Pseudomonadati</taxon>
        <taxon>Pseudomonadota</taxon>
        <taxon>Alphaproteobacteria</taxon>
        <taxon>Rhodobacterales</taxon>
        <taxon>Roseobacteraceae</taxon>
        <taxon>Roseobacter</taxon>
    </lineage>
</organism>
<proteinExistence type="inferred from homology"/>
<dbReference type="EC" id="2.7.7.6" evidence="1"/>
<dbReference type="EMBL" id="CP000362">
    <property type="protein sequence ID" value="ABG31000.1"/>
    <property type="molecule type" value="Genomic_DNA"/>
</dbReference>
<dbReference type="RefSeq" id="WP_011567620.1">
    <property type="nucleotide sequence ID" value="NC_008209.1"/>
</dbReference>
<dbReference type="SMR" id="Q16AJ3"/>
<dbReference type="STRING" id="375451.RD1_1358"/>
<dbReference type="KEGG" id="rde:RD1_1358"/>
<dbReference type="eggNOG" id="COG1758">
    <property type="taxonomic scope" value="Bacteria"/>
</dbReference>
<dbReference type="HOGENOM" id="CLU_125406_2_0_5"/>
<dbReference type="OrthoDB" id="9796300at2"/>
<dbReference type="Proteomes" id="UP000007029">
    <property type="component" value="Chromosome"/>
</dbReference>
<dbReference type="GO" id="GO:0000428">
    <property type="term" value="C:DNA-directed RNA polymerase complex"/>
    <property type="evidence" value="ECO:0007669"/>
    <property type="project" value="UniProtKB-KW"/>
</dbReference>
<dbReference type="GO" id="GO:0003677">
    <property type="term" value="F:DNA binding"/>
    <property type="evidence" value="ECO:0007669"/>
    <property type="project" value="UniProtKB-UniRule"/>
</dbReference>
<dbReference type="GO" id="GO:0003899">
    <property type="term" value="F:DNA-directed RNA polymerase activity"/>
    <property type="evidence" value="ECO:0007669"/>
    <property type="project" value="UniProtKB-UniRule"/>
</dbReference>
<dbReference type="GO" id="GO:0006351">
    <property type="term" value="P:DNA-templated transcription"/>
    <property type="evidence" value="ECO:0007669"/>
    <property type="project" value="UniProtKB-UniRule"/>
</dbReference>
<dbReference type="Gene3D" id="3.90.940.10">
    <property type="match status" value="1"/>
</dbReference>
<dbReference type="HAMAP" id="MF_00366">
    <property type="entry name" value="RNApol_bact_RpoZ"/>
    <property type="match status" value="1"/>
</dbReference>
<dbReference type="InterPro" id="IPR003716">
    <property type="entry name" value="DNA-dir_RNA_pol_omega"/>
</dbReference>
<dbReference type="InterPro" id="IPR006110">
    <property type="entry name" value="Pol_omega/Rpo6/RPB6"/>
</dbReference>
<dbReference type="InterPro" id="IPR036161">
    <property type="entry name" value="RPB6/omega-like_sf"/>
</dbReference>
<dbReference type="NCBIfam" id="TIGR00690">
    <property type="entry name" value="rpoZ"/>
    <property type="match status" value="1"/>
</dbReference>
<dbReference type="PANTHER" id="PTHR34476">
    <property type="entry name" value="DNA-DIRECTED RNA POLYMERASE SUBUNIT OMEGA"/>
    <property type="match status" value="1"/>
</dbReference>
<dbReference type="PANTHER" id="PTHR34476:SF1">
    <property type="entry name" value="DNA-DIRECTED RNA POLYMERASE SUBUNIT OMEGA"/>
    <property type="match status" value="1"/>
</dbReference>
<dbReference type="Pfam" id="PF01192">
    <property type="entry name" value="RNA_pol_Rpb6"/>
    <property type="match status" value="1"/>
</dbReference>
<dbReference type="SMART" id="SM01409">
    <property type="entry name" value="RNA_pol_Rpb6"/>
    <property type="match status" value="1"/>
</dbReference>
<dbReference type="SUPFAM" id="SSF63562">
    <property type="entry name" value="RPB6/omega subunit-like"/>
    <property type="match status" value="1"/>
</dbReference>
<keyword id="KW-0240">DNA-directed RNA polymerase</keyword>
<keyword id="KW-0548">Nucleotidyltransferase</keyword>
<keyword id="KW-1185">Reference proteome</keyword>
<keyword id="KW-0804">Transcription</keyword>
<keyword id="KW-0808">Transferase</keyword>
<gene>
    <name evidence="1" type="primary">rpoZ</name>
    <name type="ordered locus">RD1_1358</name>
</gene>
<comment type="function">
    <text evidence="1">Promotes RNA polymerase assembly. Latches the N- and C-terminal regions of the beta' subunit thereby facilitating its interaction with the beta and alpha subunits.</text>
</comment>
<comment type="catalytic activity">
    <reaction evidence="1">
        <text>RNA(n) + a ribonucleoside 5'-triphosphate = RNA(n+1) + diphosphate</text>
        <dbReference type="Rhea" id="RHEA:21248"/>
        <dbReference type="Rhea" id="RHEA-COMP:14527"/>
        <dbReference type="Rhea" id="RHEA-COMP:17342"/>
        <dbReference type="ChEBI" id="CHEBI:33019"/>
        <dbReference type="ChEBI" id="CHEBI:61557"/>
        <dbReference type="ChEBI" id="CHEBI:140395"/>
        <dbReference type="EC" id="2.7.7.6"/>
    </reaction>
</comment>
<comment type="subunit">
    <text evidence="1">The RNAP catalytic core consists of 2 alpha, 1 beta, 1 beta' and 1 omega subunit. When a sigma factor is associated with the core the holoenzyme is formed, which can initiate transcription.</text>
</comment>
<comment type="similarity">
    <text evidence="1">Belongs to the RNA polymerase subunit omega family.</text>
</comment>